<feature type="chain" id="PRO_0000355379" description="Cytochrome b6-f complex subunit 5">
    <location>
        <begin position="1"/>
        <end position="37"/>
    </location>
</feature>
<feature type="transmembrane region" description="Helical" evidence="1">
    <location>
        <begin position="5"/>
        <end position="25"/>
    </location>
</feature>
<accession>A4QKV0</accession>
<reference key="1">
    <citation type="submission" date="2007-03" db="EMBL/GenBank/DDBJ databases">
        <title>Sequencing analysis of Crucihimalaya wallichii chloroplast DNA.</title>
        <authorList>
            <person name="Hosouchi T."/>
            <person name="Tsuruoka H."/>
            <person name="Kotani H."/>
        </authorList>
    </citation>
    <scope>NUCLEOTIDE SEQUENCE [LARGE SCALE GENOMIC DNA]</scope>
</reference>
<comment type="function">
    <text evidence="1">Component of the cytochrome b6-f complex, which mediates electron transfer between photosystem II (PSII) and photosystem I (PSI), cyclic electron flow around PSI, and state transitions. PetG is required for either the stability or assembly of the cytochrome b6-f complex.</text>
</comment>
<comment type="subunit">
    <text evidence="1">The 4 large subunits of the cytochrome b6-f complex are cytochrome b6, subunit IV (17 kDa polypeptide, PetD), cytochrome f and the Rieske protein, while the 4 small subunits are PetG, PetL, PetM and PetN. The complex functions as a dimer.</text>
</comment>
<comment type="subcellular location">
    <subcellularLocation>
        <location evidence="1">Plastid</location>
        <location evidence="1">Chloroplast thylakoid membrane</location>
        <topology evidence="1">Single-pass membrane protein</topology>
    </subcellularLocation>
</comment>
<comment type="similarity">
    <text evidence="1">Belongs to the PetG family.</text>
</comment>
<proteinExistence type="inferred from homology"/>
<name>PETG_CRUWA</name>
<dbReference type="EMBL" id="AP009372">
    <property type="protein sequence ID" value="BAF50305.1"/>
    <property type="molecule type" value="Genomic_DNA"/>
</dbReference>
<dbReference type="RefSeq" id="YP_001123481.1">
    <property type="nucleotide sequence ID" value="NC_009271.1"/>
</dbReference>
<dbReference type="SMR" id="A4QKV0"/>
<dbReference type="GeneID" id="4962672"/>
<dbReference type="GO" id="GO:0009535">
    <property type="term" value="C:chloroplast thylakoid membrane"/>
    <property type="evidence" value="ECO:0007669"/>
    <property type="project" value="UniProtKB-SubCell"/>
</dbReference>
<dbReference type="GO" id="GO:0009512">
    <property type="term" value="C:cytochrome b6f complex"/>
    <property type="evidence" value="ECO:0007669"/>
    <property type="project" value="InterPro"/>
</dbReference>
<dbReference type="GO" id="GO:0045158">
    <property type="term" value="F:electron transporter, transferring electrons within cytochrome b6/f complex of photosystem II activity"/>
    <property type="evidence" value="ECO:0007669"/>
    <property type="project" value="UniProtKB-UniRule"/>
</dbReference>
<dbReference type="GO" id="GO:0017004">
    <property type="term" value="P:cytochrome complex assembly"/>
    <property type="evidence" value="ECO:0007669"/>
    <property type="project" value="UniProtKB-UniRule"/>
</dbReference>
<dbReference type="GO" id="GO:0015979">
    <property type="term" value="P:photosynthesis"/>
    <property type="evidence" value="ECO:0007669"/>
    <property type="project" value="UniProtKB-KW"/>
</dbReference>
<dbReference type="HAMAP" id="MF_00432">
    <property type="entry name" value="Cytb6_f_PetG"/>
    <property type="match status" value="1"/>
</dbReference>
<dbReference type="InterPro" id="IPR003683">
    <property type="entry name" value="Cyt_6/f_cplx_su5"/>
</dbReference>
<dbReference type="InterPro" id="IPR036099">
    <property type="entry name" value="Cyt_6/f_cplx_su5_sf"/>
</dbReference>
<dbReference type="NCBIfam" id="NF001907">
    <property type="entry name" value="PRK00665.1"/>
    <property type="match status" value="1"/>
</dbReference>
<dbReference type="Pfam" id="PF02529">
    <property type="entry name" value="PetG"/>
    <property type="match status" value="1"/>
</dbReference>
<dbReference type="PIRSF" id="PIRSF000034">
    <property type="entry name" value="Cyt_b6-f_V"/>
    <property type="match status" value="1"/>
</dbReference>
<dbReference type="SUPFAM" id="SSF103446">
    <property type="entry name" value="PetG subunit of the cytochrome b6f complex"/>
    <property type="match status" value="1"/>
</dbReference>
<sequence>MIEVFLFGIVLGLIPITLAGLFVTAYLQYRRGDQLDF</sequence>
<geneLocation type="chloroplast"/>
<keyword id="KW-0150">Chloroplast</keyword>
<keyword id="KW-0249">Electron transport</keyword>
<keyword id="KW-0472">Membrane</keyword>
<keyword id="KW-0602">Photosynthesis</keyword>
<keyword id="KW-0934">Plastid</keyword>
<keyword id="KW-0793">Thylakoid</keyword>
<keyword id="KW-0812">Transmembrane</keyword>
<keyword id="KW-1133">Transmembrane helix</keyword>
<keyword id="KW-0813">Transport</keyword>
<gene>
    <name evidence="1" type="primary">petG</name>
</gene>
<evidence type="ECO:0000255" key="1">
    <source>
        <dbReference type="HAMAP-Rule" id="MF_00432"/>
    </source>
</evidence>
<protein>
    <recommendedName>
        <fullName evidence="1">Cytochrome b6-f complex subunit 5</fullName>
    </recommendedName>
    <alternativeName>
        <fullName evidence="1">Cytochrome b6-f complex subunit PetG</fullName>
    </alternativeName>
    <alternativeName>
        <fullName evidence="1">Cytochrome b6-f complex subunit V</fullName>
    </alternativeName>
</protein>
<organism>
    <name type="scientific">Crucihimalaya wallichii</name>
    <name type="common">Rock-cress</name>
    <name type="synonym">Arabidopsis campestris</name>
    <dbReference type="NCBI Taxonomy" id="78192"/>
    <lineage>
        <taxon>Eukaryota</taxon>
        <taxon>Viridiplantae</taxon>
        <taxon>Streptophyta</taxon>
        <taxon>Embryophyta</taxon>
        <taxon>Tracheophyta</taxon>
        <taxon>Spermatophyta</taxon>
        <taxon>Magnoliopsida</taxon>
        <taxon>eudicotyledons</taxon>
        <taxon>Gunneridae</taxon>
        <taxon>Pentapetalae</taxon>
        <taxon>rosids</taxon>
        <taxon>malvids</taxon>
        <taxon>Brassicales</taxon>
        <taxon>Brassicaceae</taxon>
        <taxon>Crucihimalayeae</taxon>
        <taxon>Crucihimalaya</taxon>
    </lineage>
</organism>